<proteinExistence type="predicted"/>
<protein>
    <recommendedName>
        <fullName>Uncharacterized 33.4 kDa protein in ribosomal RNA operon</fullName>
    </recommendedName>
</protein>
<evidence type="ECO:0000255" key="1">
    <source>
        <dbReference type="PROSITE-ProRule" id="PRU00703"/>
    </source>
</evidence>
<feature type="chain" id="PRO_0000066449" description="Uncharacterized 33.4 kDa protein in ribosomal RNA operon">
    <location>
        <begin position="1"/>
        <end position="300"/>
    </location>
</feature>
<feature type="domain" description="CBS 1" evidence="1">
    <location>
        <begin position="10"/>
        <end position="68"/>
    </location>
</feature>
<feature type="domain" description="CBS 2" evidence="1">
    <location>
        <begin position="88"/>
        <end position="148"/>
    </location>
</feature>
<feature type="domain" description="CBS 3" evidence="1">
    <location>
        <begin position="152"/>
        <end position="207"/>
    </location>
</feature>
<feature type="domain" description="CBS 4" evidence="1">
    <location>
        <begin position="226"/>
        <end position="284"/>
    </location>
</feature>
<keyword id="KW-0129">CBS domain</keyword>
<keyword id="KW-0677">Repeat</keyword>
<accession>P15889</accession>
<reference key="1">
    <citation type="journal article" date="1990" name="Syst. Appl. Microbiol.">
        <title>Sequence, organisation and transcription of the ribosomal RNA operon and the downstream tRNA and protein genes in the archaebacterium Thermofilum pendens.</title>
        <authorList>
            <person name="Kjems J."/>
            <person name="Leffers H."/>
            <person name="Olesen T."/>
            <person name="Ingelore H."/>
            <person name="Garrett R.A."/>
        </authorList>
    </citation>
    <scope>NUCLEOTIDE SEQUENCE [GENOMIC DNA]</scope>
    <source>
        <strain>HVV3 / DSM 2475</strain>
    </source>
</reference>
<dbReference type="EMBL" id="X14835">
    <property type="protein sequence ID" value="CAA32944.1"/>
    <property type="molecule type" value="Genomic_DNA"/>
</dbReference>
<dbReference type="PIR" id="S08244">
    <property type="entry name" value="S08244"/>
</dbReference>
<dbReference type="SMR" id="P15889"/>
<dbReference type="GeneID" id="4602115"/>
<dbReference type="CDD" id="cd17777">
    <property type="entry name" value="CBS_arch_repeat1"/>
    <property type="match status" value="1"/>
</dbReference>
<dbReference type="CDD" id="cd17778">
    <property type="entry name" value="CBS_arch_repeat2"/>
    <property type="match status" value="1"/>
</dbReference>
<dbReference type="Gene3D" id="3.10.580.10">
    <property type="entry name" value="CBS-domain"/>
    <property type="match status" value="2"/>
</dbReference>
<dbReference type="InterPro" id="IPR000644">
    <property type="entry name" value="CBS_dom"/>
</dbReference>
<dbReference type="InterPro" id="IPR046342">
    <property type="entry name" value="CBS_dom_sf"/>
</dbReference>
<dbReference type="InterPro" id="IPR051257">
    <property type="entry name" value="Diverse_CBS-Domain"/>
</dbReference>
<dbReference type="PANTHER" id="PTHR43080:SF2">
    <property type="entry name" value="CBS DOMAIN-CONTAINING PROTEIN"/>
    <property type="match status" value="1"/>
</dbReference>
<dbReference type="PANTHER" id="PTHR43080">
    <property type="entry name" value="CBS DOMAIN-CONTAINING PROTEIN CBSX3, MITOCHONDRIAL"/>
    <property type="match status" value="1"/>
</dbReference>
<dbReference type="Pfam" id="PF00571">
    <property type="entry name" value="CBS"/>
    <property type="match status" value="4"/>
</dbReference>
<dbReference type="SMART" id="SM00116">
    <property type="entry name" value="CBS"/>
    <property type="match status" value="4"/>
</dbReference>
<dbReference type="SUPFAM" id="SSF54631">
    <property type="entry name" value="CBS-domain pair"/>
    <property type="match status" value="3"/>
</dbReference>
<dbReference type="PROSITE" id="PS51371">
    <property type="entry name" value="CBS"/>
    <property type="match status" value="4"/>
</dbReference>
<sequence length="300" mass="33437">MRVSELPVGRFPPLAVVPSSSRVLDVLVAMGRNRVRHVPLVDERGVLKGMVSARDLVDFLGGRRFRDVVEARFNGDVYKALEQTGVEFLKYDPPYVYTRSDLREVIELMVERGIGALAVVDEDLRVVGIVSERHVISLLANVETHVKVKEIMTSEVVYLSPMDSLFEGMRVMSERRIRRLPLVSGEELRGIVTIKDVLSYVSREDVLARLKEGSRSAVYDTPLVYISSKPVLAVEDDVDVGLAVSLMKKHGIGALVVTHDGKPRGIVTERDVLTRLPRVKGVEIFLDEATKTIFGGRVTF</sequence>
<name>YR33_THEPE</name>
<organism>
    <name type="scientific">Thermofilum pendens</name>
    <dbReference type="NCBI Taxonomy" id="2269"/>
    <lineage>
        <taxon>Archaea</taxon>
        <taxon>Thermoproteota</taxon>
        <taxon>Thermoprotei</taxon>
        <taxon>Thermofilales</taxon>
        <taxon>Thermofilaceae</taxon>
        <taxon>Thermofilum</taxon>
    </lineage>
</organism>